<reference key="1">
    <citation type="journal article" date="1992" name="Nucleic Acids Res.">
        <title>A cDNA clone encoding HBP-1b homologue in Arabidopsis thaliana.</title>
        <authorList>
            <person name="Kawata T."/>
            <person name="Imada T."/>
            <person name="Shiraishi H."/>
            <person name="Okada K."/>
            <person name="Shimura Y."/>
            <person name="Iwabuchi M."/>
        </authorList>
    </citation>
    <scope>NUCLEOTIDE SEQUENCE [MRNA]</scope>
    <source>
        <strain>cv. Landsberg erecta</strain>
    </source>
</reference>
<reference key="2">
    <citation type="journal article" date="1998" name="DNA Res.">
        <title>Structural analysis of Arabidopsis thaliana chromosome 5. V. Sequence features of the regions of 1,381,565 bp covered by twenty one physically assigned P1 and TAC clones.</title>
        <authorList>
            <person name="Kaneko T."/>
            <person name="Kotani H."/>
            <person name="Nakamura Y."/>
            <person name="Sato S."/>
            <person name="Asamizu E."/>
            <person name="Miyajima N."/>
            <person name="Tabata S."/>
        </authorList>
    </citation>
    <scope>NUCLEOTIDE SEQUENCE [LARGE SCALE GENOMIC DNA]</scope>
    <source>
        <strain>cv. Columbia</strain>
    </source>
</reference>
<reference key="3">
    <citation type="journal article" date="2017" name="Plant J.">
        <title>Araport11: a complete reannotation of the Arabidopsis thaliana reference genome.</title>
        <authorList>
            <person name="Cheng C.Y."/>
            <person name="Krishnakumar V."/>
            <person name="Chan A.P."/>
            <person name="Thibaud-Nissen F."/>
            <person name="Schobel S."/>
            <person name="Town C.D."/>
        </authorList>
    </citation>
    <scope>GENOME REANNOTATION</scope>
    <source>
        <strain>cv. Columbia</strain>
    </source>
</reference>
<reference key="4">
    <citation type="journal article" date="2002" name="Science">
        <title>Functional annotation of a full-length Arabidopsis cDNA collection.</title>
        <authorList>
            <person name="Seki M."/>
            <person name="Narusaka M."/>
            <person name="Kamiya A."/>
            <person name="Ishida J."/>
            <person name="Satou M."/>
            <person name="Sakurai T."/>
            <person name="Nakajima M."/>
            <person name="Enju A."/>
            <person name="Akiyama K."/>
            <person name="Oono Y."/>
            <person name="Muramatsu M."/>
            <person name="Hayashizaki Y."/>
            <person name="Kawai J."/>
            <person name="Carninci P."/>
            <person name="Itoh M."/>
            <person name="Ishii Y."/>
            <person name="Arakawa T."/>
            <person name="Shibata K."/>
            <person name="Shinagawa A."/>
            <person name="Shinozaki K."/>
        </authorList>
    </citation>
    <scope>NUCLEOTIDE SEQUENCE [LARGE SCALE MRNA]</scope>
    <source>
        <strain>cv. Columbia</strain>
    </source>
</reference>
<reference key="5">
    <citation type="journal article" date="2003" name="Science">
        <title>Empirical analysis of transcriptional activity in the Arabidopsis genome.</title>
        <authorList>
            <person name="Yamada K."/>
            <person name="Lim J."/>
            <person name="Dale J.M."/>
            <person name="Chen H."/>
            <person name="Shinn P."/>
            <person name="Palm C.J."/>
            <person name="Southwick A.M."/>
            <person name="Wu H.C."/>
            <person name="Kim C.J."/>
            <person name="Nguyen M."/>
            <person name="Pham P.K."/>
            <person name="Cheuk R.F."/>
            <person name="Karlin-Newmann G."/>
            <person name="Liu S.X."/>
            <person name="Lam B."/>
            <person name="Sakano H."/>
            <person name="Wu T."/>
            <person name="Yu G."/>
            <person name="Miranda M."/>
            <person name="Quach H.L."/>
            <person name="Tripp M."/>
            <person name="Chang C.H."/>
            <person name="Lee J.M."/>
            <person name="Toriumi M.J."/>
            <person name="Chan M.M."/>
            <person name="Tang C.C."/>
            <person name="Onodera C.S."/>
            <person name="Deng J.M."/>
            <person name="Akiyama K."/>
            <person name="Ansari Y."/>
            <person name="Arakawa T."/>
            <person name="Banh J."/>
            <person name="Banno F."/>
            <person name="Bowser L."/>
            <person name="Brooks S.Y."/>
            <person name="Carninci P."/>
            <person name="Chao Q."/>
            <person name="Choy N."/>
            <person name="Enju A."/>
            <person name="Goldsmith A.D."/>
            <person name="Gurjal M."/>
            <person name="Hansen N.F."/>
            <person name="Hayashizaki Y."/>
            <person name="Johnson-Hopson C."/>
            <person name="Hsuan V.W."/>
            <person name="Iida K."/>
            <person name="Karnes M."/>
            <person name="Khan S."/>
            <person name="Koesema E."/>
            <person name="Ishida J."/>
            <person name="Jiang P.X."/>
            <person name="Jones T."/>
            <person name="Kawai J."/>
            <person name="Kamiya A."/>
            <person name="Meyers C."/>
            <person name="Nakajima M."/>
            <person name="Narusaka M."/>
            <person name="Seki M."/>
            <person name="Sakurai T."/>
            <person name="Satou M."/>
            <person name="Tamse R."/>
            <person name="Vaysberg M."/>
            <person name="Wallender E.K."/>
            <person name="Wong C."/>
            <person name="Yamamura Y."/>
            <person name="Yuan S."/>
            <person name="Shinozaki K."/>
            <person name="Davis R.W."/>
            <person name="Theologis A."/>
            <person name="Ecker J.R."/>
        </authorList>
    </citation>
    <scope>NUCLEOTIDE SEQUENCE [LARGE SCALE MRNA]</scope>
    <source>
        <strain>cv. Columbia</strain>
    </source>
</reference>
<reference key="6">
    <citation type="journal article" date="1995" name="Nucleic Acids Res.">
        <title>Binding site requirements and differential representation of TGF factors in nuclear ASF-1 activity.</title>
        <authorList>
            <person name="Lam E."/>
            <person name="Lam Y.K."/>
        </authorList>
    </citation>
    <scope>DNA-BINDING</scope>
</reference>
<reference key="7">
    <citation type="journal article" date="1996" name="Mol. Gen. Genet.">
        <title>Binding specificity and tissue-specific expression pattern of the Arabidopsis bZIP transcription factor TGA2.</title>
        <authorList>
            <person name="de Pater S."/>
            <person name="Pham K."/>
            <person name="Memelink J."/>
            <person name="Kijne J."/>
        </authorList>
    </citation>
    <scope>CHARACTERIZATION</scope>
</reference>
<reference key="8">
    <citation type="journal article" date="2000" name="Mol. Plant Microbe Interact.">
        <title>NPR1 differentially interacts with members of the TGA/OBF family of transcription factors that bind an element of the PR-1 gene required for induction by salicylic acid.</title>
        <authorList>
            <person name="Zhou J.-M."/>
            <person name="Trifa Y."/>
            <person name="Silva H."/>
            <person name="Pontier D."/>
            <person name="Lam E."/>
            <person name="Shah J."/>
            <person name="Klessig D.F."/>
        </authorList>
    </citation>
    <scope>INTERACTION WITH NPR1</scope>
</reference>
<reference key="9">
    <citation type="journal article" date="2002" name="Trends Plant Sci.">
        <title>bZIP transcription factors in Arabidopsis.</title>
        <authorList>
            <person name="Jakoby M."/>
            <person name="Weisshaar B."/>
            <person name="Droege-Laser W."/>
            <person name="Vicente-Carbajosa J."/>
            <person name="Tiedemann J."/>
            <person name="Kroj T."/>
            <person name="Parcy F."/>
        </authorList>
    </citation>
    <scope>GENE FAMILY</scope>
    <scope>NOMENCLATURE</scope>
</reference>
<reference key="10">
    <citation type="journal article" date="2003" name="Plant Cell">
        <title>Salicylic acid and NPR1 induce the recruitment of trans-activating TGA factors to a defense gene promoter in Arabidopsis.</title>
        <authorList>
            <person name="Johnson C."/>
            <person name="Boden E."/>
            <person name="Arias J."/>
        </authorList>
    </citation>
    <scope>FUNCTION</scope>
</reference>
<reference key="11">
    <citation type="journal article" date="2005" name="Plant J.">
        <title>An Arabidopsis NPR1-like gene, NPR4, is required for disease resistance.</title>
        <authorList>
            <person name="Liu G."/>
            <person name="Holub E.B."/>
            <person name="Alonso J.M."/>
            <person name="Ecker J.R."/>
            <person name="Fobert P.R."/>
        </authorList>
    </citation>
    <scope>INTERACTION WITH NPR1 AND NPR4</scope>
</reference>
<reference key="12">
    <citation type="journal article" date="2006" name="Plant J.">
        <title>Negative regulation of defense responses in Arabidopsis by two NPR1 paralogs.</title>
        <authorList>
            <person name="Zhang Y."/>
            <person name="Cheng Y.T."/>
            <person name="Qu N."/>
            <person name="Zhao Q."/>
            <person name="Bi D."/>
            <person name="Li X."/>
        </authorList>
    </citation>
    <scope>INTERACTION WITH NPR3 AND NPR4</scope>
</reference>
<reference key="13">
    <citation type="journal article" date="2007" name="Plant J.">
        <title>SA-inducible Arabidopsis glutaredoxin interacts with TGA factors and suppresses JA-responsive PDF1.2 transcription.</title>
        <authorList>
            <person name="Ndamukong I."/>
            <person name="Abdallat A.A."/>
            <person name="Thurow C."/>
            <person name="Fode B."/>
            <person name="Zander M."/>
            <person name="Weigel R."/>
            <person name="Gatz C."/>
        </authorList>
    </citation>
    <scope>INTERACTION WITH GRXC9/GRX480</scope>
</reference>
<reference key="14">
    <citation type="journal article" date="2009" name="Plant Cell">
        <title>Nuclear activity of ROXY1, a glutaredoxin interacting with TGA factors, is required for petal development in Arabidopsis thaliana.</title>
        <authorList>
            <person name="Li S."/>
            <person name="Lauri A."/>
            <person name="Ziemann M."/>
            <person name="Busch A."/>
            <person name="Bhave M."/>
            <person name="Zachgo S."/>
        </authorList>
    </citation>
    <scope>INTERACTION WITH GRXC7/ROXY1</scope>
</reference>
<feature type="chain" id="PRO_0000076554" description="Transcription factor TGA2">
    <location>
        <begin position="1"/>
        <end position="330"/>
    </location>
</feature>
<feature type="domain" description="bZIP" evidence="2">
    <location>
        <begin position="44"/>
        <end position="107"/>
    </location>
</feature>
<feature type="domain" description="DOG1" evidence="3">
    <location>
        <begin position="111"/>
        <end position="327"/>
    </location>
</feature>
<feature type="region of interest" description="Disordered" evidence="4">
    <location>
        <begin position="1"/>
        <end position="48"/>
    </location>
</feature>
<feature type="region of interest" description="Basic motif" evidence="2">
    <location>
        <begin position="46"/>
        <end position="66"/>
    </location>
</feature>
<feature type="region of interest" description="Leucine-zipper" evidence="2">
    <location>
        <begin position="72"/>
        <end position="86"/>
    </location>
</feature>
<feature type="coiled-coil region" evidence="1">
    <location>
        <begin position="45"/>
        <end position="142"/>
    </location>
</feature>
<feature type="coiled-coil region" evidence="1">
    <location>
        <begin position="217"/>
        <end position="244"/>
    </location>
</feature>
<feature type="compositionally biased region" description="Basic and acidic residues" evidence="4">
    <location>
        <begin position="35"/>
        <end position="47"/>
    </location>
</feature>
<dbReference type="EMBL" id="D10042">
    <property type="protein sequence ID" value="BAA00933.1"/>
    <property type="molecule type" value="mRNA"/>
</dbReference>
<dbReference type="EMBL" id="AB010697">
    <property type="protein sequence ID" value="BAB11153.1"/>
    <property type="molecule type" value="Genomic_DNA"/>
</dbReference>
<dbReference type="EMBL" id="CP002688">
    <property type="protein sequence ID" value="AED91085.1"/>
    <property type="molecule type" value="Genomic_DNA"/>
</dbReference>
<dbReference type="EMBL" id="CP002688">
    <property type="protein sequence ID" value="AED91086.1"/>
    <property type="molecule type" value="Genomic_DNA"/>
</dbReference>
<dbReference type="EMBL" id="CP002688">
    <property type="protein sequence ID" value="AED91087.1"/>
    <property type="molecule type" value="Genomic_DNA"/>
</dbReference>
<dbReference type="EMBL" id="CP002688">
    <property type="protein sequence ID" value="AED91088.1"/>
    <property type="molecule type" value="Genomic_DNA"/>
</dbReference>
<dbReference type="EMBL" id="CP002688">
    <property type="protein sequence ID" value="ANM69734.1"/>
    <property type="molecule type" value="Genomic_DNA"/>
</dbReference>
<dbReference type="EMBL" id="AK117686">
    <property type="protein sequence ID" value="BAC42338.1"/>
    <property type="molecule type" value="mRNA"/>
</dbReference>
<dbReference type="EMBL" id="BT006134">
    <property type="protein sequence ID" value="AAP04119.1"/>
    <property type="molecule type" value="mRNA"/>
</dbReference>
<dbReference type="PIR" id="S35439">
    <property type="entry name" value="S35439"/>
</dbReference>
<dbReference type="RefSeq" id="NP_001031845.1">
    <property type="nucleotide sequence ID" value="NM_001036768.2"/>
</dbReference>
<dbReference type="RefSeq" id="NP_001078539.1">
    <property type="nucleotide sequence ID" value="NM_001085070.2"/>
</dbReference>
<dbReference type="RefSeq" id="NP_001331392.1">
    <property type="nucleotide sequence ID" value="NM_001342913.1"/>
</dbReference>
<dbReference type="RefSeq" id="NP_196312.1">
    <property type="nucleotide sequence ID" value="NM_120777.3"/>
</dbReference>
<dbReference type="RefSeq" id="NP_974744.1">
    <property type="nucleotide sequence ID" value="NM_203015.1"/>
</dbReference>
<dbReference type="SMR" id="P43273"/>
<dbReference type="BioGRID" id="15865">
    <property type="interactions" value="37"/>
</dbReference>
<dbReference type="ComplexPortal" id="CPX-3572">
    <property type="entry name" value="TGA2-NPR1 complex"/>
</dbReference>
<dbReference type="ComplexPortal" id="CPX-3601">
    <property type="entry name" value="TGA2 complex"/>
</dbReference>
<dbReference type="FunCoup" id="P43273">
    <property type="interactions" value="2481"/>
</dbReference>
<dbReference type="IntAct" id="P43273">
    <property type="interactions" value="24"/>
</dbReference>
<dbReference type="STRING" id="3702.P43273"/>
<dbReference type="PaxDb" id="3702-AT5G06950.1"/>
<dbReference type="ProteomicsDB" id="246401"/>
<dbReference type="EnsemblPlants" id="AT5G06950.1">
    <property type="protein sequence ID" value="AT5G06950.1"/>
    <property type="gene ID" value="AT5G06950"/>
</dbReference>
<dbReference type="EnsemblPlants" id="AT5G06950.2">
    <property type="protein sequence ID" value="AT5G06950.2"/>
    <property type="gene ID" value="AT5G06950"/>
</dbReference>
<dbReference type="EnsemblPlants" id="AT5G06950.3">
    <property type="protein sequence ID" value="AT5G06950.3"/>
    <property type="gene ID" value="AT5G06950"/>
</dbReference>
<dbReference type="EnsemblPlants" id="AT5G06950.4">
    <property type="protein sequence ID" value="AT5G06950.4"/>
    <property type="gene ID" value="AT5G06950"/>
</dbReference>
<dbReference type="EnsemblPlants" id="AT5G06950.5">
    <property type="protein sequence ID" value="AT5G06950.5"/>
    <property type="gene ID" value="AT5G06950"/>
</dbReference>
<dbReference type="GeneID" id="830586"/>
<dbReference type="Gramene" id="AT5G06950.1">
    <property type="protein sequence ID" value="AT5G06950.1"/>
    <property type="gene ID" value="AT5G06950"/>
</dbReference>
<dbReference type="Gramene" id="AT5G06950.2">
    <property type="protein sequence ID" value="AT5G06950.2"/>
    <property type="gene ID" value="AT5G06950"/>
</dbReference>
<dbReference type="Gramene" id="AT5G06950.3">
    <property type="protein sequence ID" value="AT5G06950.3"/>
    <property type="gene ID" value="AT5G06950"/>
</dbReference>
<dbReference type="Gramene" id="AT5G06950.4">
    <property type="protein sequence ID" value="AT5G06950.4"/>
    <property type="gene ID" value="AT5G06950"/>
</dbReference>
<dbReference type="Gramene" id="AT5G06950.5">
    <property type="protein sequence ID" value="AT5G06950.5"/>
    <property type="gene ID" value="AT5G06950"/>
</dbReference>
<dbReference type="KEGG" id="ath:AT5G06950"/>
<dbReference type="Araport" id="AT5G06950"/>
<dbReference type="TAIR" id="AT5G06950">
    <property type="gene designation" value="AHBP-1B"/>
</dbReference>
<dbReference type="eggNOG" id="ENOG502QU32">
    <property type="taxonomic scope" value="Eukaryota"/>
</dbReference>
<dbReference type="HOGENOM" id="CLU_024782_1_1_1"/>
<dbReference type="InParanoid" id="P43273"/>
<dbReference type="OMA" id="HREEFAM"/>
<dbReference type="OrthoDB" id="2015618at2759"/>
<dbReference type="PhylomeDB" id="P43273"/>
<dbReference type="PRO" id="PR:P43273"/>
<dbReference type="Proteomes" id="UP000006548">
    <property type="component" value="Chromosome 5"/>
</dbReference>
<dbReference type="ExpressionAtlas" id="P43273">
    <property type="expression patterns" value="baseline and differential"/>
</dbReference>
<dbReference type="GO" id="GO:0005737">
    <property type="term" value="C:cytoplasm"/>
    <property type="evidence" value="ECO:0000314"/>
    <property type="project" value="TAIR"/>
</dbReference>
<dbReference type="GO" id="GO:0005634">
    <property type="term" value="C:nucleus"/>
    <property type="evidence" value="ECO:0000314"/>
    <property type="project" value="TAIR"/>
</dbReference>
<dbReference type="GO" id="GO:0090575">
    <property type="term" value="C:RNA polymerase II transcription regulator complex"/>
    <property type="evidence" value="ECO:0000353"/>
    <property type="project" value="ComplexPortal"/>
</dbReference>
<dbReference type="GO" id="GO:0090571">
    <property type="term" value="C:RNA polymerase II transcription repressor complex"/>
    <property type="evidence" value="ECO:0000353"/>
    <property type="project" value="ComplexPortal"/>
</dbReference>
<dbReference type="GO" id="GO:0003677">
    <property type="term" value="F:DNA binding"/>
    <property type="evidence" value="ECO:0000314"/>
    <property type="project" value="TAIR"/>
</dbReference>
<dbReference type="GO" id="GO:0003700">
    <property type="term" value="F:DNA-binding transcription factor activity"/>
    <property type="evidence" value="ECO:0000314"/>
    <property type="project" value="TAIR"/>
</dbReference>
<dbReference type="GO" id="GO:0000976">
    <property type="term" value="F:transcription cis-regulatory region binding"/>
    <property type="evidence" value="ECO:0000353"/>
    <property type="project" value="TAIR"/>
</dbReference>
<dbReference type="GO" id="GO:0006351">
    <property type="term" value="P:DNA-templated transcription"/>
    <property type="evidence" value="ECO:0007669"/>
    <property type="project" value="InterPro"/>
</dbReference>
<dbReference type="GO" id="GO:0045892">
    <property type="term" value="P:negative regulation of DNA-templated transcription"/>
    <property type="evidence" value="ECO:0000315"/>
    <property type="project" value="ComplexPortal"/>
</dbReference>
<dbReference type="GO" id="GO:0009626">
    <property type="term" value="P:plant-type hypersensitive response"/>
    <property type="evidence" value="ECO:0007669"/>
    <property type="project" value="UniProtKB-KW"/>
</dbReference>
<dbReference type="GO" id="GO:0045893">
    <property type="term" value="P:positive regulation of DNA-templated transcription"/>
    <property type="evidence" value="ECO:0000314"/>
    <property type="project" value="TAIR"/>
</dbReference>
<dbReference type="GO" id="GO:0009410">
    <property type="term" value="P:response to xenobiotic stimulus"/>
    <property type="evidence" value="ECO:0000316"/>
    <property type="project" value="TAIR"/>
</dbReference>
<dbReference type="GO" id="GO:0009862">
    <property type="term" value="P:systemic acquired resistance, salicylic acid mediated signaling pathway"/>
    <property type="evidence" value="ECO:0000314"/>
    <property type="project" value="ComplexPortal"/>
</dbReference>
<dbReference type="FunFam" id="1.20.5.170:FF:000019">
    <property type="entry name" value="BZIP family transcription factor"/>
    <property type="match status" value="1"/>
</dbReference>
<dbReference type="Gene3D" id="1.20.5.170">
    <property type="match status" value="1"/>
</dbReference>
<dbReference type="InterPro" id="IPR004827">
    <property type="entry name" value="bZIP"/>
</dbReference>
<dbReference type="InterPro" id="IPR046347">
    <property type="entry name" value="bZIP_sf"/>
</dbReference>
<dbReference type="InterPro" id="IPR025422">
    <property type="entry name" value="TGA_domain"/>
</dbReference>
<dbReference type="PANTHER" id="PTHR45693:SF46">
    <property type="entry name" value="TRANSCRIPTION FACTOR TGA2-RELATED"/>
    <property type="match status" value="1"/>
</dbReference>
<dbReference type="PANTHER" id="PTHR45693">
    <property type="entry name" value="TRANSCRIPTION FACTOR TGA9"/>
    <property type="match status" value="1"/>
</dbReference>
<dbReference type="Pfam" id="PF00170">
    <property type="entry name" value="bZIP_1"/>
    <property type="match status" value="1"/>
</dbReference>
<dbReference type="Pfam" id="PF14144">
    <property type="entry name" value="DOG1"/>
    <property type="match status" value="1"/>
</dbReference>
<dbReference type="SMART" id="SM00338">
    <property type="entry name" value="BRLZ"/>
    <property type="match status" value="1"/>
</dbReference>
<dbReference type="SUPFAM" id="SSF57959">
    <property type="entry name" value="Leucine zipper domain"/>
    <property type="match status" value="1"/>
</dbReference>
<dbReference type="PROSITE" id="PS50217">
    <property type="entry name" value="BZIP"/>
    <property type="match status" value="1"/>
</dbReference>
<dbReference type="PROSITE" id="PS00036">
    <property type="entry name" value="BZIP_BASIC"/>
    <property type="match status" value="1"/>
</dbReference>
<dbReference type="PROSITE" id="PS51806">
    <property type="entry name" value="DOG1"/>
    <property type="match status" value="1"/>
</dbReference>
<gene>
    <name type="primary">TGA2</name>
    <name type="synonym">BZIP20</name>
    <name type="synonym">HBP1B</name>
    <name type="ordered locus">At5g06950</name>
    <name type="ORF">MOJ9.12</name>
</gene>
<evidence type="ECO:0000255" key="1"/>
<evidence type="ECO:0000255" key="2">
    <source>
        <dbReference type="PROSITE-ProRule" id="PRU00978"/>
    </source>
</evidence>
<evidence type="ECO:0000255" key="3">
    <source>
        <dbReference type="PROSITE-ProRule" id="PRU01147"/>
    </source>
</evidence>
<evidence type="ECO:0000256" key="4">
    <source>
        <dbReference type="SAM" id="MobiDB-lite"/>
    </source>
</evidence>
<evidence type="ECO:0000269" key="5">
    <source>
    </source>
</evidence>
<evidence type="ECO:0000269" key="6">
    <source>
    </source>
</evidence>
<evidence type="ECO:0000269" key="7">
    <source>
    </source>
</evidence>
<evidence type="ECO:0000269" key="8">
    <source>
    </source>
</evidence>
<evidence type="ECO:0000269" key="9">
    <source>
    </source>
</evidence>
<evidence type="ECO:0000269" key="10">
    <source>
    </source>
</evidence>
<evidence type="ECO:0000305" key="11"/>
<proteinExistence type="evidence at protein level"/>
<organism>
    <name type="scientific">Arabidopsis thaliana</name>
    <name type="common">Mouse-ear cress</name>
    <dbReference type="NCBI Taxonomy" id="3702"/>
    <lineage>
        <taxon>Eukaryota</taxon>
        <taxon>Viridiplantae</taxon>
        <taxon>Streptophyta</taxon>
        <taxon>Embryophyta</taxon>
        <taxon>Tracheophyta</taxon>
        <taxon>Spermatophyta</taxon>
        <taxon>Magnoliopsida</taxon>
        <taxon>eudicotyledons</taxon>
        <taxon>Gunneridae</taxon>
        <taxon>Pentapetalae</taxon>
        <taxon>rosids</taxon>
        <taxon>malvids</taxon>
        <taxon>Brassicales</taxon>
        <taxon>Brassicaceae</taxon>
        <taxon>Camelineae</taxon>
        <taxon>Arabidopsis</taxon>
    </lineage>
</organism>
<accession>P43273</accession>
<comment type="function">
    <text evidence="6">Transcriptional activator that binds specifically to the DNA sequence 5'-TGACG-3'. Recognizes ocs elements like the as-1 motif of the cauliflower mosaic virus 35S promoter. Binding to the as-1-like cis elements mediate auxin- and salicylic acid-inducible transcription. Required to induce the systemic acquired resistance (SAR) via the regulation of pathogenesis-related genes expression. Binding to the as-1 element of PR-1 promoter is salicylic acid-inducible and mediated by NPR1. Could also bind to the C-boxes (5'-ATGACGTCAT-3') with high affinity.</text>
</comment>
<comment type="subunit">
    <text evidence="5 7 8 9 10">Binds DNA as a dimer. Interacts with NPR1, NPR3 and NPR4. Interacts with GRXC7/ROXY1 and GRXC9/GRX480.</text>
</comment>
<comment type="interaction">
    <interactant intactId="EBI-541307">
        <id>P43273</id>
    </interactant>
    <interactant intactId="EBI-4426914">
        <id>Q8VYD2</id>
        <label>GPL1</label>
    </interactant>
    <organismsDiffer>false</organismsDiffer>
    <experiments>6</experiments>
</comment>
<comment type="interaction">
    <interactant intactId="EBI-541307">
        <id>P43273</id>
    </interactant>
    <interactant intactId="EBI-2257898">
        <id>Q96305</id>
        <label>GRXC7</label>
    </interactant>
    <organismsDiffer>false</organismsDiffer>
    <experiments>3</experiments>
</comment>
<comment type="interaction">
    <interactant intactId="EBI-541307">
        <id>P43273</id>
    </interactant>
    <interactant intactId="EBI-4434651">
        <id>Q8LF89</id>
        <label>GRXC8</label>
    </interactant>
    <organismsDiffer>false</organismsDiffer>
    <experiments>2</experiments>
</comment>
<comment type="interaction">
    <interactant intactId="EBI-541307">
        <id>P43273</id>
    </interactant>
    <interactant intactId="EBI-1545762">
        <id>Q9SGP6</id>
        <label>GRXC9</label>
    </interactant>
    <organismsDiffer>false</organismsDiffer>
    <experiments>6</experiments>
</comment>
<comment type="interaction">
    <interactant intactId="EBI-541307">
        <id>P43273</id>
    </interactant>
    <interactant intactId="EBI-1392127">
        <id>P93002</id>
        <label>NPR1</label>
    </interactant>
    <organismsDiffer>false</organismsDiffer>
    <experiments>12</experiments>
</comment>
<comment type="interaction">
    <interactant intactId="EBI-541307">
        <id>P43273</id>
    </interactant>
    <interactant intactId="EBI-541093">
        <id>Q8L9W4</id>
        <label>NPR1</label>
    </interactant>
    <organismsDiffer>false</organismsDiffer>
    <experiments>7</experiments>
</comment>
<comment type="interaction">
    <interactant intactId="EBI-541307">
        <id>P43273</id>
    </interactant>
    <interactant intactId="EBI-4441365">
        <id>Q8L746</id>
        <label>NPR3</label>
    </interactant>
    <organismsDiffer>false</organismsDiffer>
    <experiments>9</experiments>
</comment>
<comment type="interaction">
    <interactant intactId="EBI-541307">
        <id>P43273</id>
    </interactant>
    <interactant intactId="EBI-1238472">
        <id>Q9S7H5</id>
        <label>SCL21</label>
    </interactant>
    <organismsDiffer>false</organismsDiffer>
    <experiments>3</experiments>
</comment>
<comment type="interaction">
    <interactant intactId="EBI-541307">
        <id>P43273</id>
    </interactant>
    <interactant intactId="EBI-541366">
        <id>Q39234</id>
        <label>TGA3</label>
    </interactant>
    <organismsDiffer>false</organismsDiffer>
    <experiments>3</experiments>
</comment>
<comment type="interaction">
    <interactant intactId="EBI-541307">
        <id>P43273</id>
    </interactant>
    <interactant intactId="EBI-541381">
        <id>Q39163</id>
        <label>TGA5</label>
    </interactant>
    <organismsDiffer>false</organismsDiffer>
    <experiments>8</experiments>
</comment>
<comment type="interaction">
    <interactant intactId="EBI-541307">
        <id>P43273</id>
    </interactant>
    <interactant intactId="EBI-541400">
        <id>Q93ZE2</id>
        <label>TGA7</label>
    </interactant>
    <organismsDiffer>false</organismsDiffer>
    <experiments>3</experiments>
</comment>
<comment type="interaction">
    <interactant intactId="EBI-541307">
        <id>P43273</id>
    </interactant>
    <interactant intactId="EBI-1237844">
        <id>Q93XM6</id>
        <label>TGA9</label>
    </interactant>
    <organismsDiffer>false</organismsDiffer>
    <experiments>4</experiments>
</comment>
<comment type="subcellular location">
    <subcellularLocation>
        <location>Nucleus</location>
    </subcellularLocation>
</comment>
<comment type="tissue specificity">
    <text>Expressed in the whole plant.</text>
</comment>
<comment type="similarity">
    <text evidence="11">Belongs to the bZIP family.</text>
</comment>
<protein>
    <recommendedName>
        <fullName>Transcription factor TGA2</fullName>
    </recommendedName>
    <alternativeName>
        <fullName>HBP-1b homolog</fullName>
        <shortName>AHBP-1b</shortName>
    </alternativeName>
    <alternativeName>
        <fullName>bZIP transcription factor 20</fullName>
        <shortName>AtbZIP20</shortName>
    </alternativeName>
</protein>
<sequence>MADTSPRTDVSTDDDTDHPDLGSEGALVNTAASDSSDRSKGKMDQKTLRRLAQNREAARKSRLRKKAYVQQLENSRLKLTQLEQELQRARQQGVFISGTGDQAHSTGGNGALAFDAEHSRWLEEKNKQMNELRSALNAHAGDSELRIIVDGVMAHYEELFRIKSNAAKNDVFHLLSGMWKTPAERCFLWLGGFRSSELLKLLANQLEPMTERQLMGINNLQQTSQQAEDALSQGMESLQQSLADTLSSGTLGSSSSGNVASYMGQMAMAMGKLGTLEGFIRQADNLRLQTLQQMIRVLTTRQSARALLAIHDYFSRLRALSSLWLARPRE</sequence>
<keyword id="KW-0010">Activator</keyword>
<keyword id="KW-0175">Coiled coil</keyword>
<keyword id="KW-0238">DNA-binding</keyword>
<keyword id="KW-0381">Hypersensitive response</keyword>
<keyword id="KW-0539">Nucleus</keyword>
<keyword id="KW-0611">Plant defense</keyword>
<keyword id="KW-1185">Reference proteome</keyword>
<keyword id="KW-0804">Transcription</keyword>
<keyword id="KW-0805">Transcription regulation</keyword>
<name>TGA2_ARATH</name>